<gene>
    <name evidence="1" type="primary">betA</name>
    <name type="ordered locus">E2348C_0273</name>
</gene>
<keyword id="KW-0274">FAD</keyword>
<keyword id="KW-0285">Flavoprotein</keyword>
<keyword id="KW-0520">NAD</keyword>
<keyword id="KW-0560">Oxidoreductase</keyword>
<keyword id="KW-1185">Reference proteome</keyword>
<protein>
    <recommendedName>
        <fullName evidence="1">Oxygen-dependent choline dehydrogenase</fullName>
        <shortName evidence="1">CDH</shortName>
        <shortName evidence="1">CHD</shortName>
        <ecNumber evidence="1">1.1.99.1</ecNumber>
    </recommendedName>
    <alternativeName>
        <fullName evidence="1">Betaine aldehyde dehydrogenase</fullName>
        <shortName evidence="1">BADH</shortName>
        <ecNumber evidence="1">1.2.1.8</ecNumber>
    </alternativeName>
</protein>
<reference key="1">
    <citation type="journal article" date="2009" name="J. Bacteriol.">
        <title>Complete genome sequence and comparative genome analysis of enteropathogenic Escherichia coli O127:H6 strain E2348/69.</title>
        <authorList>
            <person name="Iguchi A."/>
            <person name="Thomson N.R."/>
            <person name="Ogura Y."/>
            <person name="Saunders D."/>
            <person name="Ooka T."/>
            <person name="Henderson I.R."/>
            <person name="Harris D."/>
            <person name="Asadulghani M."/>
            <person name="Kurokawa K."/>
            <person name="Dean P."/>
            <person name="Kenny B."/>
            <person name="Quail M.A."/>
            <person name="Thurston S."/>
            <person name="Dougan G."/>
            <person name="Hayashi T."/>
            <person name="Parkhill J."/>
            <person name="Frankel G."/>
        </authorList>
    </citation>
    <scope>NUCLEOTIDE SEQUENCE [LARGE SCALE GENOMIC DNA]</scope>
    <source>
        <strain>E2348/69 / EPEC</strain>
    </source>
</reference>
<comment type="function">
    <text evidence="1">Involved in the biosynthesis of the osmoprotectant glycine betaine. Catalyzes the oxidation of choline to betaine aldehyde and betaine aldehyde to glycine betaine at the same rate.</text>
</comment>
<comment type="catalytic activity">
    <reaction evidence="1">
        <text>choline + A = betaine aldehyde + AH2</text>
        <dbReference type="Rhea" id="RHEA:17433"/>
        <dbReference type="ChEBI" id="CHEBI:13193"/>
        <dbReference type="ChEBI" id="CHEBI:15354"/>
        <dbReference type="ChEBI" id="CHEBI:15710"/>
        <dbReference type="ChEBI" id="CHEBI:17499"/>
        <dbReference type="EC" id="1.1.99.1"/>
    </reaction>
</comment>
<comment type="catalytic activity">
    <reaction evidence="1">
        <text>betaine aldehyde + NAD(+) + H2O = glycine betaine + NADH + 2 H(+)</text>
        <dbReference type="Rhea" id="RHEA:15305"/>
        <dbReference type="ChEBI" id="CHEBI:15377"/>
        <dbReference type="ChEBI" id="CHEBI:15378"/>
        <dbReference type="ChEBI" id="CHEBI:15710"/>
        <dbReference type="ChEBI" id="CHEBI:17750"/>
        <dbReference type="ChEBI" id="CHEBI:57540"/>
        <dbReference type="ChEBI" id="CHEBI:57945"/>
        <dbReference type="EC" id="1.2.1.8"/>
    </reaction>
</comment>
<comment type="cofactor">
    <cofactor evidence="1">
        <name>FAD</name>
        <dbReference type="ChEBI" id="CHEBI:57692"/>
    </cofactor>
</comment>
<comment type="pathway">
    <text evidence="1">Amine and polyamine biosynthesis; betaine biosynthesis via choline pathway; betaine aldehyde from choline (cytochrome c reductase route): step 1/1.</text>
</comment>
<comment type="similarity">
    <text evidence="1">Belongs to the GMC oxidoreductase family.</text>
</comment>
<organism>
    <name type="scientific">Escherichia coli O127:H6 (strain E2348/69 / EPEC)</name>
    <dbReference type="NCBI Taxonomy" id="574521"/>
    <lineage>
        <taxon>Bacteria</taxon>
        <taxon>Pseudomonadati</taxon>
        <taxon>Pseudomonadota</taxon>
        <taxon>Gammaproteobacteria</taxon>
        <taxon>Enterobacterales</taxon>
        <taxon>Enterobacteriaceae</taxon>
        <taxon>Escherichia</taxon>
    </lineage>
</organism>
<evidence type="ECO:0000255" key="1">
    <source>
        <dbReference type="HAMAP-Rule" id="MF_00750"/>
    </source>
</evidence>
<proteinExistence type="inferred from homology"/>
<dbReference type="EC" id="1.1.99.1" evidence="1"/>
<dbReference type="EC" id="1.2.1.8" evidence="1"/>
<dbReference type="EMBL" id="FM180568">
    <property type="protein sequence ID" value="CAS07821.1"/>
    <property type="molecule type" value="Genomic_DNA"/>
</dbReference>
<dbReference type="RefSeq" id="WP_001159125.1">
    <property type="nucleotide sequence ID" value="NC_011601.1"/>
</dbReference>
<dbReference type="SMR" id="B7UJG4"/>
<dbReference type="KEGG" id="ecg:E2348C_0273"/>
<dbReference type="HOGENOM" id="CLU_002865_7_1_6"/>
<dbReference type="UniPathway" id="UPA00529">
    <property type="reaction ID" value="UER00385"/>
</dbReference>
<dbReference type="Proteomes" id="UP000008205">
    <property type="component" value="Chromosome"/>
</dbReference>
<dbReference type="GO" id="GO:0016020">
    <property type="term" value="C:membrane"/>
    <property type="evidence" value="ECO:0007669"/>
    <property type="project" value="TreeGrafter"/>
</dbReference>
<dbReference type="GO" id="GO:0008802">
    <property type="term" value="F:betaine-aldehyde dehydrogenase (NAD+) activity"/>
    <property type="evidence" value="ECO:0007669"/>
    <property type="project" value="UniProtKB-EC"/>
</dbReference>
<dbReference type="GO" id="GO:0008812">
    <property type="term" value="F:choline dehydrogenase activity"/>
    <property type="evidence" value="ECO:0007669"/>
    <property type="project" value="UniProtKB-UniRule"/>
</dbReference>
<dbReference type="GO" id="GO:0050660">
    <property type="term" value="F:flavin adenine dinucleotide binding"/>
    <property type="evidence" value="ECO:0007669"/>
    <property type="project" value="InterPro"/>
</dbReference>
<dbReference type="GO" id="GO:0019285">
    <property type="term" value="P:glycine betaine biosynthetic process from choline"/>
    <property type="evidence" value="ECO:0007669"/>
    <property type="project" value="UniProtKB-UniRule"/>
</dbReference>
<dbReference type="Gene3D" id="3.50.50.60">
    <property type="entry name" value="FAD/NAD(P)-binding domain"/>
    <property type="match status" value="1"/>
</dbReference>
<dbReference type="Gene3D" id="3.30.560.10">
    <property type="entry name" value="Glucose Oxidase, domain 3"/>
    <property type="match status" value="1"/>
</dbReference>
<dbReference type="HAMAP" id="MF_00750">
    <property type="entry name" value="Choline_dehydrogen"/>
    <property type="match status" value="1"/>
</dbReference>
<dbReference type="InterPro" id="IPR011533">
    <property type="entry name" value="BetA"/>
</dbReference>
<dbReference type="InterPro" id="IPR036188">
    <property type="entry name" value="FAD/NAD-bd_sf"/>
</dbReference>
<dbReference type="InterPro" id="IPR012132">
    <property type="entry name" value="GMC_OxRdtase"/>
</dbReference>
<dbReference type="InterPro" id="IPR000172">
    <property type="entry name" value="GMC_OxRdtase_N"/>
</dbReference>
<dbReference type="InterPro" id="IPR007867">
    <property type="entry name" value="GMC_OxRtase_C"/>
</dbReference>
<dbReference type="NCBIfam" id="TIGR01810">
    <property type="entry name" value="betA"/>
    <property type="match status" value="1"/>
</dbReference>
<dbReference type="NCBIfam" id="NF002550">
    <property type="entry name" value="PRK02106.1"/>
    <property type="match status" value="1"/>
</dbReference>
<dbReference type="PANTHER" id="PTHR11552:SF147">
    <property type="entry name" value="CHOLINE DEHYDROGENASE, MITOCHONDRIAL"/>
    <property type="match status" value="1"/>
</dbReference>
<dbReference type="PANTHER" id="PTHR11552">
    <property type="entry name" value="GLUCOSE-METHANOL-CHOLINE GMC OXIDOREDUCTASE"/>
    <property type="match status" value="1"/>
</dbReference>
<dbReference type="Pfam" id="PF05199">
    <property type="entry name" value="GMC_oxred_C"/>
    <property type="match status" value="1"/>
</dbReference>
<dbReference type="Pfam" id="PF00732">
    <property type="entry name" value="GMC_oxred_N"/>
    <property type="match status" value="1"/>
</dbReference>
<dbReference type="PIRSF" id="PIRSF000137">
    <property type="entry name" value="Alcohol_oxidase"/>
    <property type="match status" value="1"/>
</dbReference>
<dbReference type="SUPFAM" id="SSF54373">
    <property type="entry name" value="FAD-linked reductases, C-terminal domain"/>
    <property type="match status" value="1"/>
</dbReference>
<dbReference type="SUPFAM" id="SSF51905">
    <property type="entry name" value="FAD/NAD(P)-binding domain"/>
    <property type="match status" value="1"/>
</dbReference>
<dbReference type="PROSITE" id="PS00623">
    <property type="entry name" value="GMC_OXRED_1"/>
    <property type="match status" value="1"/>
</dbReference>
<dbReference type="PROSITE" id="PS00624">
    <property type="entry name" value="GMC_OXRED_2"/>
    <property type="match status" value="1"/>
</dbReference>
<feature type="chain" id="PRO_1000148350" description="Oxygen-dependent choline dehydrogenase">
    <location>
        <begin position="1"/>
        <end position="556"/>
    </location>
</feature>
<feature type="active site" description="Proton acceptor" evidence="1">
    <location>
        <position position="473"/>
    </location>
</feature>
<feature type="binding site" evidence="1">
    <location>
        <begin position="4"/>
        <end position="33"/>
    </location>
    <ligand>
        <name>FAD</name>
        <dbReference type="ChEBI" id="CHEBI:57692"/>
    </ligand>
</feature>
<name>BETA_ECO27</name>
<sequence length="556" mass="61883">MQFDYIIIGAGSAGNVLATRLTEDPNTTVLLLEAGGPDYRFDFRTQMPAALAFPLQGKRYNWAYETEPEPFMNNRRMECGRGKGLGGSSLINGMCYIRGNALDLDNWAQEPGLENWSYLDCLPYYRKAETRDVGENDYHGGDGPVSVITSKPGVNPLFEAMIEAGMQAGYPRTDDLNGYQQEGFGPMDRTVTPHGRRASTARGYLDQAKSRPNLTIRTHAMTDHIIFDGKRAVGVEWLEGDSTIPTRAAANKEVLLCAGAIASPQILQRSGVGNAELLAEFDIPLVHELPGVGENLQDHLEMYLQYECKEPVSLYPALQWWNQPRIGAEWLFGGTGVGASNHFEAGGFIRSREEFAWPNIQYHFLPVAINYNGSNAVKEHGFQCHVGSMRSPSRGHVRIKSRDPHQHPAILFNYMSHEQDWQEFRDAIRTTREIMHQPALDQYRGREISPGVECQTDEQLDEFVRNHAETAFHPCGTCKMGYDEMAVVDGEGRVHGLEGLRVVDASIMPQIITGNLNATTIMIGEKIADMIRGKEALPRSTAGYFVANGMPVRAKK</sequence>
<accession>B7UJG4</accession>